<protein>
    <recommendedName>
        <fullName>Profilin</fullName>
    </recommendedName>
    <alternativeName>
        <fullName>Pollen allergen Mer a 1</fullName>
    </alternativeName>
    <allergenName>Mer a 1</allergenName>
</protein>
<dbReference type="EMBL" id="Y13271">
    <property type="protein sequence ID" value="CAA73720.1"/>
    <property type="molecule type" value="mRNA"/>
</dbReference>
<dbReference type="SMR" id="O49894"/>
<dbReference type="Allergome" id="3375">
    <property type="allergen name" value="Mer a 1.0101"/>
</dbReference>
<dbReference type="Allergome" id="476">
    <property type="allergen name" value="Mer a 1"/>
</dbReference>
<dbReference type="GO" id="GO:0005938">
    <property type="term" value="C:cell cortex"/>
    <property type="evidence" value="ECO:0007669"/>
    <property type="project" value="TreeGrafter"/>
</dbReference>
<dbReference type="GO" id="GO:0005856">
    <property type="term" value="C:cytoskeleton"/>
    <property type="evidence" value="ECO:0007669"/>
    <property type="project" value="UniProtKB-SubCell"/>
</dbReference>
<dbReference type="GO" id="GO:0003785">
    <property type="term" value="F:actin monomer binding"/>
    <property type="evidence" value="ECO:0007669"/>
    <property type="project" value="TreeGrafter"/>
</dbReference>
<dbReference type="CDD" id="cd00148">
    <property type="entry name" value="PROF"/>
    <property type="match status" value="1"/>
</dbReference>
<dbReference type="FunFam" id="3.30.450.30:FF:000001">
    <property type="entry name" value="Profilin"/>
    <property type="match status" value="1"/>
</dbReference>
<dbReference type="Gene3D" id="3.30.450.30">
    <property type="entry name" value="Dynein light chain 2a, cytoplasmic"/>
    <property type="match status" value="1"/>
</dbReference>
<dbReference type="InterPro" id="IPR048278">
    <property type="entry name" value="PFN"/>
</dbReference>
<dbReference type="InterPro" id="IPR005455">
    <property type="entry name" value="PFN_euk"/>
</dbReference>
<dbReference type="InterPro" id="IPR036140">
    <property type="entry name" value="PFN_sf"/>
</dbReference>
<dbReference type="InterPro" id="IPR027310">
    <property type="entry name" value="Profilin_CS"/>
</dbReference>
<dbReference type="PANTHER" id="PTHR11604">
    <property type="entry name" value="PROFILIN"/>
    <property type="match status" value="1"/>
</dbReference>
<dbReference type="PANTHER" id="PTHR11604:SF25">
    <property type="entry name" value="PROFILIN-5"/>
    <property type="match status" value="1"/>
</dbReference>
<dbReference type="Pfam" id="PF00235">
    <property type="entry name" value="Profilin"/>
    <property type="match status" value="1"/>
</dbReference>
<dbReference type="PRINTS" id="PR00392">
    <property type="entry name" value="PROFILIN"/>
</dbReference>
<dbReference type="PRINTS" id="PR01640">
    <property type="entry name" value="PROFILINPLNT"/>
</dbReference>
<dbReference type="SMART" id="SM00392">
    <property type="entry name" value="PROF"/>
    <property type="match status" value="1"/>
</dbReference>
<dbReference type="SUPFAM" id="SSF55770">
    <property type="entry name" value="Profilin (actin-binding protein)"/>
    <property type="match status" value="1"/>
</dbReference>
<dbReference type="PROSITE" id="PS00414">
    <property type="entry name" value="PROFILIN"/>
    <property type="match status" value="1"/>
</dbReference>
<keyword id="KW-0009">Actin-binding</keyword>
<keyword id="KW-0020">Allergen</keyword>
<keyword id="KW-0963">Cytoplasm</keyword>
<keyword id="KW-0206">Cytoskeleton</keyword>
<accession>O49894</accession>
<name>PROF_MERAN</name>
<evidence type="ECO:0000250" key="1"/>
<evidence type="ECO:0000269" key="2">
    <source>
    </source>
</evidence>
<evidence type="ECO:0000305" key="3"/>
<comment type="function">
    <text evidence="1">Binds to actin and affects the structure of the cytoskeleton. At high concentrations, profilin prevents the polymerization of actin, whereas it enhances it at low concentrations. By binding to PIP2, it inhibits the formation of IP3 and DG (By similarity).</text>
</comment>
<comment type="subunit">
    <text>Occurs in many kinds of cells as a complex with monomeric actin in a 1:1 ratio.</text>
</comment>
<comment type="subcellular location">
    <subcellularLocation>
        <location evidence="1">Cytoplasm</location>
        <location evidence="1">Cytoskeleton</location>
    </subcellularLocation>
</comment>
<comment type="allergen">
    <text evidence="2">Causes an allergic reaction in human.</text>
</comment>
<comment type="similarity">
    <text evidence="3">Belongs to the profilin family.</text>
</comment>
<proteinExistence type="evidence at protein level"/>
<feature type="initiator methionine" description="Removed" evidence="1">
    <location>
        <position position="1"/>
    </location>
</feature>
<feature type="chain" id="PRO_0000199654" description="Profilin">
    <location>
        <begin position="2"/>
        <end position="133"/>
    </location>
</feature>
<organism>
    <name type="scientific">Mercurialis annua</name>
    <name type="common">Annual mercury</name>
    <dbReference type="NCBI Taxonomy" id="3986"/>
    <lineage>
        <taxon>Eukaryota</taxon>
        <taxon>Viridiplantae</taxon>
        <taxon>Streptophyta</taxon>
        <taxon>Embryophyta</taxon>
        <taxon>Tracheophyta</taxon>
        <taxon>Spermatophyta</taxon>
        <taxon>Magnoliopsida</taxon>
        <taxon>eudicotyledons</taxon>
        <taxon>Gunneridae</taxon>
        <taxon>Pentapetalae</taxon>
        <taxon>rosids</taxon>
        <taxon>fabids</taxon>
        <taxon>Malpighiales</taxon>
        <taxon>Euphorbiaceae</taxon>
        <taxon>Acalyphoideae</taxon>
        <taxon>Acalypheae</taxon>
        <taxon>Mercurialis</taxon>
    </lineage>
</organism>
<reference key="1">
    <citation type="journal article" date="1998" name="J. Allergy Clin. Immunol.">
        <title>Characterization of recombinant Mercurialis annua major allergen Mer a 1 (profilin).</title>
        <authorList>
            <person name="Vallverdu A."/>
            <person name="Asturias J.A."/>
            <person name="Arilla M.C."/>
            <person name="Gomez-Bayon N."/>
            <person name="Martinez A."/>
            <person name="Martinez J."/>
            <person name="Palacios R."/>
        </authorList>
    </citation>
    <scope>NUCLEOTIDE SEQUENCE [MRNA]</scope>
    <scope>ALLERGEN</scope>
    <source>
        <tissue>Pollen</tissue>
    </source>
</reference>
<sequence>MSWQTYVDDHLMCDIDGQGQHLAAASIVGHDGSIWAQSASFPQLKPEEITGIMKDFDEPGHLAPTGLYIAGTKYMVIQGESGAVIRGKKGSGGITIKKTGQALVFGIYEEPVTPGQCNMVVERLGDYLIEQGM</sequence>